<feature type="chain" id="PRO_0000138070" description="Probable glycerol-3-phosphate dehydrogenase 2">
    <location>
        <begin position="1"/>
        <end position="392"/>
    </location>
</feature>
<feature type="active site" description="Proton acceptor" evidence="1">
    <location>
        <position position="248"/>
    </location>
</feature>
<feature type="binding site" evidence="1">
    <location>
        <begin position="42"/>
        <end position="47"/>
    </location>
    <ligand>
        <name>NAD(+)</name>
        <dbReference type="ChEBI" id="CHEBI:57540"/>
    </ligand>
</feature>
<feature type="binding site" evidence="1">
    <location>
        <position position="130"/>
    </location>
    <ligand>
        <name>NAD(+)</name>
        <dbReference type="ChEBI" id="CHEBI:57540"/>
    </ligand>
</feature>
<feature type="binding site" evidence="1">
    <location>
        <position position="153"/>
    </location>
    <ligand>
        <name>NAD(+)</name>
        <dbReference type="ChEBI" id="CHEBI:57540"/>
    </ligand>
</feature>
<feature type="binding site" evidence="1">
    <location>
        <position position="153"/>
    </location>
    <ligand>
        <name>substrate</name>
    </ligand>
</feature>
<feature type="binding site" evidence="1">
    <location>
        <position position="196"/>
    </location>
    <ligand>
        <name>NAD(+)</name>
        <dbReference type="ChEBI" id="CHEBI:57540"/>
    </ligand>
</feature>
<feature type="binding site" evidence="1">
    <location>
        <begin position="312"/>
        <end position="313"/>
    </location>
    <ligand>
        <name>substrate</name>
    </ligand>
</feature>
<feature type="binding site" evidence="1">
    <location>
        <position position="312"/>
    </location>
    <ligand>
        <name>NAD(+)</name>
        <dbReference type="ChEBI" id="CHEBI:57540"/>
    </ligand>
</feature>
<feature type="binding site" evidence="1">
    <location>
        <position position="341"/>
    </location>
    <ligand>
        <name>NAD(+)</name>
        <dbReference type="ChEBI" id="CHEBI:57540"/>
    </ligand>
</feature>
<name>GPDH2_CAEEL</name>
<keyword id="KW-0963">Cytoplasm</keyword>
<keyword id="KW-0520">NAD</keyword>
<keyword id="KW-0560">Oxidoreductase</keyword>
<keyword id="KW-1185">Reference proteome</keyword>
<reference key="1">
    <citation type="journal article" date="1994" name="Nature">
        <title>2.2 Mb of contiguous nucleotide sequence from chromosome III of C. elegans.</title>
        <authorList>
            <person name="Wilson R."/>
            <person name="Ainscough R."/>
            <person name="Anderson K."/>
            <person name="Baynes C."/>
            <person name="Berks M."/>
            <person name="Bonfield J."/>
            <person name="Burton J."/>
            <person name="Connell M."/>
            <person name="Copsey T."/>
            <person name="Cooper J."/>
            <person name="Coulson A."/>
            <person name="Craxton M."/>
            <person name="Dear S."/>
            <person name="Du Z."/>
            <person name="Durbin R."/>
            <person name="Favello A."/>
            <person name="Fraser A."/>
            <person name="Fulton L."/>
            <person name="Gardner A."/>
            <person name="Green P."/>
            <person name="Hawkins T."/>
            <person name="Hillier L."/>
            <person name="Jier M."/>
            <person name="Johnston L."/>
            <person name="Jones M."/>
            <person name="Kershaw J."/>
            <person name="Kirsten J."/>
            <person name="Laisster N."/>
            <person name="Latreille P."/>
            <person name="Lightning J."/>
            <person name="Lloyd C."/>
            <person name="Mortimore B."/>
            <person name="O'Callaghan M."/>
            <person name="Parsons J."/>
            <person name="Percy C."/>
            <person name="Rifken L."/>
            <person name="Roopra A."/>
            <person name="Saunders D."/>
            <person name="Shownkeen R."/>
            <person name="Sims M."/>
            <person name="Smaldon N."/>
            <person name="Smith A."/>
            <person name="Smith M."/>
            <person name="Sonnhammer E."/>
            <person name="Staden R."/>
            <person name="Sulston J."/>
            <person name="Thierry-Mieg J."/>
            <person name="Thomas K."/>
            <person name="Vaudin M."/>
            <person name="Vaughan K."/>
            <person name="Waterston R."/>
            <person name="Watson A."/>
            <person name="Weinstock L."/>
            <person name="Wilkinson-Sproat J."/>
            <person name="Wohldman P."/>
        </authorList>
    </citation>
    <scope>NUCLEOTIDE SEQUENCE [LARGE SCALE GENOMIC DNA]</scope>
    <source>
        <strain>Bristol N2</strain>
    </source>
</reference>
<reference key="2">
    <citation type="journal article" date="1998" name="Science">
        <title>Genome sequence of the nematode C. elegans: a platform for investigating biology.</title>
        <authorList>
            <consortium name="The C. elegans sequencing consortium"/>
        </authorList>
    </citation>
    <scope>NUCLEOTIDE SEQUENCE [LARGE SCALE GENOMIC DNA]</scope>
    <source>
        <strain>Bristol N2</strain>
    </source>
</reference>
<accession>P34517</accession>
<accession>Q8I4H2</accession>
<dbReference type="EC" id="1.1.1.8"/>
<dbReference type="EMBL" id="Z22180">
    <property type="protein sequence ID" value="CAD54146.1"/>
    <property type="molecule type" value="Genomic_DNA"/>
</dbReference>
<dbReference type="PIR" id="S40754">
    <property type="entry name" value="S40754"/>
</dbReference>
<dbReference type="RefSeq" id="NP_871632.1">
    <property type="nucleotide sequence ID" value="NM_181903.7"/>
</dbReference>
<dbReference type="SMR" id="P34517"/>
<dbReference type="BioGRID" id="41593">
    <property type="interactions" value="7"/>
</dbReference>
<dbReference type="FunCoup" id="P34517">
    <property type="interactions" value="1275"/>
</dbReference>
<dbReference type="IntAct" id="P34517">
    <property type="interactions" value="1"/>
</dbReference>
<dbReference type="STRING" id="6239.K11H3.1b.1"/>
<dbReference type="PaxDb" id="6239-K11H3.1b"/>
<dbReference type="PeptideAtlas" id="P34517"/>
<dbReference type="EnsemblMetazoa" id="K11H3.1b.1">
    <property type="protein sequence ID" value="K11H3.1b.1"/>
    <property type="gene ID" value="WBGene00010778"/>
</dbReference>
<dbReference type="GeneID" id="176399"/>
<dbReference type="KEGG" id="cel:CELE_K11H3.1"/>
<dbReference type="AGR" id="WB:WBGene00010778"/>
<dbReference type="CTD" id="176399"/>
<dbReference type="WormBase" id="K11H3.1b">
    <property type="protein sequence ID" value="CE31851"/>
    <property type="gene ID" value="WBGene00010778"/>
    <property type="gene designation" value="gpdh-2"/>
</dbReference>
<dbReference type="eggNOG" id="KOG2711">
    <property type="taxonomic scope" value="Eukaryota"/>
</dbReference>
<dbReference type="InParanoid" id="P34517"/>
<dbReference type="OMA" id="NNRHENI"/>
<dbReference type="OrthoDB" id="10263760at2759"/>
<dbReference type="PhylomeDB" id="P34517"/>
<dbReference type="Reactome" id="R-CEL-1483166">
    <property type="pathway name" value="Synthesis of PA"/>
</dbReference>
<dbReference type="PRO" id="PR:P34517"/>
<dbReference type="Proteomes" id="UP000001940">
    <property type="component" value="Chromosome III"/>
</dbReference>
<dbReference type="Bgee" id="WBGene00010778">
    <property type="expression patterns" value="Expressed in germ line (C elegans) and 4 other cell types or tissues"/>
</dbReference>
<dbReference type="ExpressionAtlas" id="P34517">
    <property type="expression patterns" value="baseline and differential"/>
</dbReference>
<dbReference type="GO" id="GO:0005829">
    <property type="term" value="C:cytosol"/>
    <property type="evidence" value="ECO:0000318"/>
    <property type="project" value="GO_Central"/>
</dbReference>
<dbReference type="GO" id="GO:0141152">
    <property type="term" value="F:glycerol-3-phosphate dehydrogenase (NAD+) activity"/>
    <property type="evidence" value="ECO:0007669"/>
    <property type="project" value="UniProtKB-EC"/>
</dbReference>
<dbReference type="GO" id="GO:0004368">
    <property type="term" value="F:glycerol-3-phosphate dehydrogenase (quinone) activity"/>
    <property type="evidence" value="ECO:0000250"/>
    <property type="project" value="WormBase"/>
</dbReference>
<dbReference type="GO" id="GO:0051287">
    <property type="term" value="F:NAD binding"/>
    <property type="evidence" value="ECO:0007669"/>
    <property type="project" value="InterPro"/>
</dbReference>
<dbReference type="GO" id="GO:0042803">
    <property type="term" value="F:protein homodimerization activity"/>
    <property type="evidence" value="ECO:0007669"/>
    <property type="project" value="InterPro"/>
</dbReference>
<dbReference type="GO" id="GO:0005975">
    <property type="term" value="P:carbohydrate metabolic process"/>
    <property type="evidence" value="ECO:0007669"/>
    <property type="project" value="InterPro"/>
</dbReference>
<dbReference type="GO" id="GO:0046168">
    <property type="term" value="P:glycerol-3-phosphate catabolic process"/>
    <property type="evidence" value="ECO:0007669"/>
    <property type="project" value="InterPro"/>
</dbReference>
<dbReference type="GO" id="GO:0006072">
    <property type="term" value="P:glycerol-3-phosphate metabolic process"/>
    <property type="evidence" value="ECO:0000318"/>
    <property type="project" value="GO_Central"/>
</dbReference>
<dbReference type="GO" id="GO:0006972">
    <property type="term" value="P:hyperosmotic response"/>
    <property type="evidence" value="ECO:0000316"/>
    <property type="project" value="WormBase"/>
</dbReference>
<dbReference type="GO" id="GO:0006973">
    <property type="term" value="P:intracellular accumulation of glycerol"/>
    <property type="evidence" value="ECO:0000316"/>
    <property type="project" value="WormBase"/>
</dbReference>
<dbReference type="FunFam" id="1.10.1040.10:FF:000004">
    <property type="entry name" value="Glycerol-3-phosphate dehydrogenase [NAD(+)]"/>
    <property type="match status" value="1"/>
</dbReference>
<dbReference type="FunFam" id="3.40.50.720:FF:000672">
    <property type="entry name" value="Glycerol-3-phosphate dehydrogenase [NAD(+)]"/>
    <property type="match status" value="1"/>
</dbReference>
<dbReference type="Gene3D" id="1.10.1040.10">
    <property type="entry name" value="N-(1-d-carboxylethyl)-l-norvaline Dehydrogenase, domain 2"/>
    <property type="match status" value="1"/>
</dbReference>
<dbReference type="Gene3D" id="3.40.50.720">
    <property type="entry name" value="NAD(P)-binding Rossmann-like Domain"/>
    <property type="match status" value="1"/>
</dbReference>
<dbReference type="InterPro" id="IPR008927">
    <property type="entry name" value="6-PGluconate_DH-like_C_sf"/>
</dbReference>
<dbReference type="InterPro" id="IPR013328">
    <property type="entry name" value="6PGD_dom2"/>
</dbReference>
<dbReference type="InterPro" id="IPR006168">
    <property type="entry name" value="G3P_DH_NAD-dep"/>
</dbReference>
<dbReference type="InterPro" id="IPR006109">
    <property type="entry name" value="G3P_DH_NAD-dep_C"/>
</dbReference>
<dbReference type="InterPro" id="IPR017751">
    <property type="entry name" value="G3P_DH_NAD-dep_euk"/>
</dbReference>
<dbReference type="InterPro" id="IPR011128">
    <property type="entry name" value="G3P_DH_NAD-dep_N"/>
</dbReference>
<dbReference type="InterPro" id="IPR036291">
    <property type="entry name" value="NAD(P)-bd_dom_sf"/>
</dbReference>
<dbReference type="NCBIfam" id="TIGR03376">
    <property type="entry name" value="glycerol3P_DH"/>
    <property type="match status" value="1"/>
</dbReference>
<dbReference type="PANTHER" id="PTHR11728">
    <property type="entry name" value="GLYCEROL-3-PHOSPHATE DEHYDROGENASE"/>
    <property type="match status" value="1"/>
</dbReference>
<dbReference type="PANTHER" id="PTHR11728:SF8">
    <property type="entry name" value="GLYCEROL-3-PHOSPHATE DEHYDROGENASE [NAD(+)]-RELATED"/>
    <property type="match status" value="1"/>
</dbReference>
<dbReference type="Pfam" id="PF07479">
    <property type="entry name" value="NAD_Gly3P_dh_C"/>
    <property type="match status" value="1"/>
</dbReference>
<dbReference type="Pfam" id="PF01210">
    <property type="entry name" value="NAD_Gly3P_dh_N"/>
    <property type="match status" value="1"/>
</dbReference>
<dbReference type="PIRSF" id="PIRSF000114">
    <property type="entry name" value="Glycerol-3-P_dh"/>
    <property type="match status" value="1"/>
</dbReference>
<dbReference type="PRINTS" id="PR00077">
    <property type="entry name" value="GPDHDRGNASE"/>
</dbReference>
<dbReference type="SUPFAM" id="SSF48179">
    <property type="entry name" value="6-phosphogluconate dehydrogenase C-terminal domain-like"/>
    <property type="match status" value="1"/>
</dbReference>
<dbReference type="SUPFAM" id="SSF51735">
    <property type="entry name" value="NAD(P)-binding Rossmann-fold domains"/>
    <property type="match status" value="1"/>
</dbReference>
<dbReference type="PROSITE" id="PS00957">
    <property type="entry name" value="NAD_G3PDH"/>
    <property type="match status" value="1"/>
</dbReference>
<proteinExistence type="inferred from homology"/>
<sequence length="392" mass="42792">MSSSRIPQCENSSRLSLSSIFRYFGTTSTIATMSPKKVTIIGSGNWGSAIARIVGSTTKSFPDEFDPTVRMWVFEEIVNGEKLSEVINNRHENIKYLPGKVLPNNVVAVTDLVESCEGSNVLVFVVPHQFVKGICEKLVGKIPADTQAISLIKGISFDKTNQGVSTEKRGGLKLISEEIKEILKIEVSVLMGANLAPEVANDNFCEATIGCKRKAEDGPLLKKLFHTDNFRINVVEDAHTVELCGALKNVVACAAGFTDGLGYGDNTKAAVIRLGLMETTKFVEHYYPGSNLQTFFESCGIADLITTCYGGRNRKVCEAFVKTGKSMAEVEKELLNGQSAQGPLTAEEVYLMMHKTGLDAKFPLFTAVHKICAGEMKPAELVDCLRNHPEHM</sequence>
<evidence type="ECO:0000250" key="1"/>
<evidence type="ECO:0000305" key="2"/>
<protein>
    <recommendedName>
        <fullName>Probable glycerol-3-phosphate dehydrogenase 2</fullName>
        <ecNumber>1.1.1.8</ecNumber>
    </recommendedName>
</protein>
<gene>
    <name type="primary">gpdh-2</name>
    <name type="ORF">K11H3.1</name>
</gene>
<organism>
    <name type="scientific">Caenorhabditis elegans</name>
    <dbReference type="NCBI Taxonomy" id="6239"/>
    <lineage>
        <taxon>Eukaryota</taxon>
        <taxon>Metazoa</taxon>
        <taxon>Ecdysozoa</taxon>
        <taxon>Nematoda</taxon>
        <taxon>Chromadorea</taxon>
        <taxon>Rhabditida</taxon>
        <taxon>Rhabditina</taxon>
        <taxon>Rhabditomorpha</taxon>
        <taxon>Rhabditoidea</taxon>
        <taxon>Rhabditidae</taxon>
        <taxon>Peloderinae</taxon>
        <taxon>Caenorhabditis</taxon>
    </lineage>
</organism>
<comment type="catalytic activity">
    <reaction>
        <text>sn-glycerol 3-phosphate + NAD(+) = dihydroxyacetone phosphate + NADH + H(+)</text>
        <dbReference type="Rhea" id="RHEA:11092"/>
        <dbReference type="ChEBI" id="CHEBI:15378"/>
        <dbReference type="ChEBI" id="CHEBI:57540"/>
        <dbReference type="ChEBI" id="CHEBI:57597"/>
        <dbReference type="ChEBI" id="CHEBI:57642"/>
        <dbReference type="ChEBI" id="CHEBI:57945"/>
        <dbReference type="EC" id="1.1.1.8"/>
    </reaction>
</comment>
<comment type="subunit">
    <text evidence="1">Homodimer.</text>
</comment>
<comment type="subcellular location">
    <subcellularLocation>
        <location evidence="1">Cytoplasm</location>
    </subcellularLocation>
</comment>
<comment type="similarity">
    <text evidence="2">Belongs to the NAD-dependent glycerol-3-phosphate dehydrogenase family.</text>
</comment>